<accession>Q0H8Y0</accession>
<geneLocation type="mitochondrion"/>
<keyword id="KW-0255">Endonuclease</keyword>
<keyword id="KW-0378">Hydrolase</keyword>
<keyword id="KW-0404">Intron homing</keyword>
<keyword id="KW-0472">Membrane</keyword>
<keyword id="KW-0496">Mitochondrion</keyword>
<keyword id="KW-0540">Nuclease</keyword>
<keyword id="KW-1185">Reference proteome</keyword>
<keyword id="KW-0812">Transmembrane</keyword>
<keyword id="KW-1133">Transmembrane helix</keyword>
<name>AI4_MYCMD</name>
<proteinExistence type="inferred from homology"/>
<comment type="function">
    <text evidence="1">Mitochondrial DNA endonuclease involved in intron homing.</text>
</comment>
<comment type="subcellular location">
    <subcellularLocation>
        <location>Mitochondrion</location>
    </subcellularLocation>
    <subcellularLocation>
        <location evidence="3">Membrane</location>
        <topology evidence="3">Multi-pass membrane protein</topology>
    </subcellularLocation>
</comment>
<comment type="PTM">
    <text>The mature protein may arise from proteolytic cleavage of an in-frame translation of COX1 exons 1 to 4 plus intron 4, containing the aI4 open reading frame.</text>
</comment>
<comment type="similarity">
    <text evidence="3">In the C-terminal section; belongs to the LAGLIDADG endonuclease family.</text>
</comment>
<comment type="similarity">
    <text evidence="3">In the N-terminal section; belongs to the heme-copper respiratory oxidase family.</text>
</comment>
<comment type="sequence caution" evidence="3">
    <conflict type="erroneous gene model prediction">
        <sequence resource="EMBL-CDS" id="AAZ67026"/>
    </conflict>
</comment>
<organism>
    <name type="scientific">Mycosarcoma maydis</name>
    <name type="common">Corn smut fungus</name>
    <name type="synonym">Ustilago maydis</name>
    <dbReference type="NCBI Taxonomy" id="5270"/>
    <lineage>
        <taxon>Eukaryota</taxon>
        <taxon>Fungi</taxon>
        <taxon>Dikarya</taxon>
        <taxon>Basidiomycota</taxon>
        <taxon>Ustilaginomycotina</taxon>
        <taxon>Ustilaginomycetes</taxon>
        <taxon>Ustilaginales</taxon>
        <taxon>Ustilaginaceae</taxon>
        <taxon>Mycosarcoma</taxon>
    </lineage>
</organism>
<feature type="chain" id="PRO_0000271156" description="Truncated non-functional cytochrome oxidase 1">
    <location>
        <begin position="1"/>
        <end status="unknown"/>
    </location>
</feature>
<feature type="chain" id="PRO_0000271157" description="Intron-encoded endonuclease aI4">
    <location>
        <begin status="unknown"/>
        <end position="530"/>
    </location>
</feature>
<feature type="transmembrane region" description="Helical" evidence="2">
    <location>
        <begin position="15"/>
        <end position="35"/>
    </location>
</feature>
<feature type="transmembrane region" description="Helical" evidence="2">
    <location>
        <begin position="56"/>
        <end position="76"/>
    </location>
</feature>
<feature type="transmembrane region" description="Helical" evidence="2">
    <location>
        <begin position="99"/>
        <end position="119"/>
    </location>
</feature>
<feature type="transmembrane region" description="Helical" evidence="2">
    <location>
        <begin position="145"/>
        <end position="165"/>
    </location>
</feature>
<feature type="transmembrane region" description="Helical" evidence="2">
    <location>
        <begin position="183"/>
        <end position="203"/>
    </location>
</feature>
<feature type="region of interest" description="COX1 exons 1 to 4 encoded">
    <location>
        <begin position="1"/>
        <end position="204"/>
    </location>
</feature>
<feature type="region of interest" description="COX1 intron 4 encoded">
    <location>
        <begin position="205"/>
        <end position="530"/>
    </location>
</feature>
<reference key="1">
    <citation type="submission" date="2005-08" db="EMBL/GenBank/DDBJ databases">
        <title>Annotation of mitochondrial genome of Ustilago maydis and comparative analysis of basidiomycete mtDNAs.</title>
        <authorList>
            <person name="Kennell J.C."/>
            <person name="Boehmer C."/>
        </authorList>
    </citation>
    <scope>NUCLEOTIDE SEQUENCE [LARGE SCALE GENOMIC DNA]</scope>
    <source>
        <strain>DSM 14603 / FGSC 9021 / UM521</strain>
    </source>
</reference>
<reference key="2">
    <citation type="journal article" date="2006" name="Nature">
        <title>Insights from the genome of the biotrophic fungal plant pathogen Ustilago maydis.</title>
        <authorList>
            <person name="Kaemper J."/>
            <person name="Kahmann R."/>
            <person name="Boelker M."/>
            <person name="Ma L.-J."/>
            <person name="Brefort T."/>
            <person name="Saville B.J."/>
            <person name="Banuett F."/>
            <person name="Kronstad J.W."/>
            <person name="Gold S.E."/>
            <person name="Mueller O."/>
            <person name="Perlin M.H."/>
            <person name="Woesten H.A.B."/>
            <person name="de Vries R."/>
            <person name="Ruiz-Herrera J."/>
            <person name="Reynaga-Pena C.G."/>
            <person name="Snetselaar K."/>
            <person name="McCann M."/>
            <person name="Perez-Martin J."/>
            <person name="Feldbruegge M."/>
            <person name="Basse C.W."/>
            <person name="Steinberg G."/>
            <person name="Ibeas J.I."/>
            <person name="Holloman W."/>
            <person name="Guzman P."/>
            <person name="Farman M.L."/>
            <person name="Stajich J.E."/>
            <person name="Sentandreu R."/>
            <person name="Gonzalez-Prieto J.M."/>
            <person name="Kennell J.C."/>
            <person name="Molina L."/>
            <person name="Schirawski J."/>
            <person name="Mendoza-Mendoza A."/>
            <person name="Greilinger D."/>
            <person name="Muench K."/>
            <person name="Roessel N."/>
            <person name="Scherer M."/>
            <person name="Vranes M."/>
            <person name="Ladendorf O."/>
            <person name="Vincon V."/>
            <person name="Fuchs U."/>
            <person name="Sandrock B."/>
            <person name="Meng S."/>
            <person name="Ho E.C.H."/>
            <person name="Cahill M.J."/>
            <person name="Boyce K.J."/>
            <person name="Klose J."/>
            <person name="Klosterman S.J."/>
            <person name="Deelstra H.J."/>
            <person name="Ortiz-Castellanos L."/>
            <person name="Li W."/>
            <person name="Sanchez-Alonso P."/>
            <person name="Schreier P.H."/>
            <person name="Haeuser-Hahn I."/>
            <person name="Vaupel M."/>
            <person name="Koopmann E."/>
            <person name="Friedrich G."/>
            <person name="Voss H."/>
            <person name="Schlueter T."/>
            <person name="Margolis J."/>
            <person name="Platt D."/>
            <person name="Swimmer C."/>
            <person name="Gnirke A."/>
            <person name="Chen F."/>
            <person name="Vysotskaia V."/>
            <person name="Mannhaupt G."/>
            <person name="Gueldener U."/>
            <person name="Muensterkoetter M."/>
            <person name="Haase D."/>
            <person name="Oesterheld M."/>
            <person name="Mewes H.-W."/>
            <person name="Mauceli E.W."/>
            <person name="DeCaprio D."/>
            <person name="Wade C.M."/>
            <person name="Butler J."/>
            <person name="Young S.K."/>
            <person name="Jaffe D.B."/>
            <person name="Calvo S.E."/>
            <person name="Nusbaum C."/>
            <person name="Galagan J.E."/>
            <person name="Birren B.W."/>
        </authorList>
    </citation>
    <scope>NUCLEOTIDE SEQUENCE [LARGE SCALE GENOMIC DNA]</scope>
    <source>
        <strain>DSM 14603 / FGSC 9021 / UM521</strain>
    </source>
</reference>
<gene>
    <name type="primary">aI4</name>
</gene>
<evidence type="ECO:0000250" key="1"/>
<evidence type="ECO:0000255" key="2"/>
<evidence type="ECO:0000305" key="3"/>
<dbReference type="EC" id="3.1.-.-"/>
<dbReference type="EMBL" id="DQ157700">
    <property type="protein sequence ID" value="AAZ67026.1"/>
    <property type="status" value="ALT_SEQ"/>
    <property type="molecule type" value="Genomic_DNA"/>
</dbReference>
<dbReference type="EMBL" id="AACP01000277">
    <property type="status" value="NOT_ANNOTATED_CDS"/>
    <property type="molecule type" value="Genomic_DNA"/>
</dbReference>
<dbReference type="SMR" id="Q0H8Y0"/>
<dbReference type="STRING" id="237631.Q0H8Y0"/>
<dbReference type="InParanoid" id="Q0H8Y0"/>
<dbReference type="Proteomes" id="UP000000561">
    <property type="component" value="Mitochondrion"/>
</dbReference>
<dbReference type="GO" id="GO:0005739">
    <property type="term" value="C:mitochondrion"/>
    <property type="evidence" value="ECO:0007669"/>
    <property type="project" value="UniProtKB-SubCell"/>
</dbReference>
<dbReference type="GO" id="GO:0045277">
    <property type="term" value="C:respiratory chain complex IV"/>
    <property type="evidence" value="ECO:0000318"/>
    <property type="project" value="GO_Central"/>
</dbReference>
<dbReference type="GO" id="GO:0004129">
    <property type="term" value="F:cytochrome-c oxidase activity"/>
    <property type="evidence" value="ECO:0007669"/>
    <property type="project" value="InterPro"/>
</dbReference>
<dbReference type="GO" id="GO:0004519">
    <property type="term" value="F:endonuclease activity"/>
    <property type="evidence" value="ECO:0007669"/>
    <property type="project" value="UniProtKB-KW"/>
</dbReference>
<dbReference type="GO" id="GO:0020037">
    <property type="term" value="F:heme binding"/>
    <property type="evidence" value="ECO:0007669"/>
    <property type="project" value="InterPro"/>
</dbReference>
<dbReference type="GO" id="GO:0009060">
    <property type="term" value="P:aerobic respiration"/>
    <property type="evidence" value="ECO:0000318"/>
    <property type="project" value="GO_Central"/>
</dbReference>
<dbReference type="GO" id="GO:0006314">
    <property type="term" value="P:intron homing"/>
    <property type="evidence" value="ECO:0007669"/>
    <property type="project" value="UniProtKB-KW"/>
</dbReference>
<dbReference type="GO" id="GO:0022904">
    <property type="term" value="P:respiratory electron transport chain"/>
    <property type="evidence" value="ECO:0000318"/>
    <property type="project" value="GO_Central"/>
</dbReference>
<dbReference type="FunFam" id="3.10.28.10:FF:000007">
    <property type="entry name" value="Intron-encoded DNA endonuclease aI3"/>
    <property type="match status" value="1"/>
</dbReference>
<dbReference type="FunFam" id="3.10.28.10:FF:000011">
    <property type="entry name" value="Intron-encoded DNA endonuclease aI3"/>
    <property type="match status" value="1"/>
</dbReference>
<dbReference type="Gene3D" id="1.20.210.10">
    <property type="entry name" value="Cytochrome c oxidase-like, subunit I domain"/>
    <property type="match status" value="1"/>
</dbReference>
<dbReference type="Gene3D" id="3.10.28.10">
    <property type="entry name" value="Homing endonucleases"/>
    <property type="match status" value="2"/>
</dbReference>
<dbReference type="InterPro" id="IPR023616">
    <property type="entry name" value="Cyt_c_oxase-like_su1_dom"/>
</dbReference>
<dbReference type="InterPro" id="IPR036927">
    <property type="entry name" value="Cyt_c_oxase-like_su1_sf"/>
</dbReference>
<dbReference type="InterPro" id="IPR000883">
    <property type="entry name" value="Cyt_C_Oxase_1"/>
</dbReference>
<dbReference type="InterPro" id="IPR027434">
    <property type="entry name" value="Homing_endonucl"/>
</dbReference>
<dbReference type="InterPro" id="IPR004860">
    <property type="entry name" value="LAGLIDADG_dom"/>
</dbReference>
<dbReference type="PANTHER" id="PTHR10422">
    <property type="entry name" value="CYTOCHROME C OXIDASE SUBUNIT 1"/>
    <property type="match status" value="1"/>
</dbReference>
<dbReference type="PANTHER" id="PTHR10422:SF18">
    <property type="entry name" value="CYTOCHROME C OXIDASE SUBUNIT 1"/>
    <property type="match status" value="1"/>
</dbReference>
<dbReference type="Pfam" id="PF00115">
    <property type="entry name" value="COX1"/>
    <property type="match status" value="1"/>
</dbReference>
<dbReference type="Pfam" id="PF00961">
    <property type="entry name" value="LAGLIDADG_1"/>
    <property type="match status" value="2"/>
</dbReference>
<dbReference type="PRINTS" id="PR01165">
    <property type="entry name" value="CYCOXIDASEI"/>
</dbReference>
<dbReference type="SUPFAM" id="SSF81442">
    <property type="entry name" value="Cytochrome c oxidase subunit I-like"/>
    <property type="match status" value="1"/>
</dbReference>
<dbReference type="SUPFAM" id="SSF55608">
    <property type="entry name" value="Homing endonucleases"/>
    <property type="match status" value="2"/>
</dbReference>
<dbReference type="PROSITE" id="PS50855">
    <property type="entry name" value="COX1"/>
    <property type="match status" value="1"/>
</dbReference>
<sequence>MVRWLYSTNAKDIGTLYLIFAVFAAMIGTAFSVLIRMELAAPGVQYLNGDHQLYNVIITAHAFVMIFFMVMPAMVGGFGNYLVPVMIGAPDMAFPRLNNISFWLLPPSLILLLASAFVEQGAGTGWTVYPPLSGLQSHSGGSVDLAIFSLHLSGISSMLGAMNFITTVLNMRNPGMTLHKLPLFVWAIFVTAILLLLSLPVLAGKFVPALNLAVCWELFSSVFSKIIDVKDDQQVTYESYNFIWNLNDCAPELSISHMSSLLFFGSYLAGLIEGDGTIVVPKQERSAKGKRNYPSVQIVFQLKDFPLCQIVQKLIGHGTISKKKQAAAYILTINNIQGLIELSNLINGKIRGPKYYQFVLLVEYLNKKCPNLNLKPAGFNKTPLGFDSWLSGFIEADGSFQVRTSLSSKYPRLSLSFELVQSRITHYGFTMFTIMQEIAIFLETNVNEIRSERKNPQYRLRTSSLKTNKNIRDYLVKYPLKGTKYLDFKDWCKVLSYFEQGTHMDNTARIVEIKSQMNQRRTVYNWDHLQ</sequence>
<protein>
    <recommendedName>
        <fullName>Probable intron-encoded endonuclease aI4</fullName>
    </recommendedName>
    <component>
        <recommendedName>
            <fullName>Truncated non-functional cytochrome oxidase 1</fullName>
        </recommendedName>
    </component>
    <component>
        <recommendedName>
            <fullName>Intron-encoded endonuclease aI4</fullName>
            <ecNumber>3.1.-.-</ecNumber>
        </recommendedName>
    </component>
</protein>